<proteinExistence type="inferred from homology"/>
<feature type="chain" id="PRO_1000018289" description="Tryptophan synthase alpha chain">
    <location>
        <begin position="1"/>
        <end position="242"/>
    </location>
</feature>
<feature type="active site" description="Proton acceptor" evidence="1">
    <location>
        <position position="31"/>
    </location>
</feature>
<feature type="active site" description="Proton acceptor" evidence="1">
    <location>
        <position position="42"/>
    </location>
</feature>
<sequence length="242" mass="27117">MTKLFIPYIMGNKDLIENATLLSENGADIIEIGVPFSDPVADGPVIMEAGQQAIKQGITIDYIFNQLEKHGDQIKCNYVLMTYYNIICHYGEQAFFEKCRDTGVYGLIIPDLPYELSQRLKQQFSHYGVKIISLVAMTTDDKRIKDIVSHAEGFIYTVTMNATTGQNGAFHPELKRKIESIKAIANVPVVAGFGIRTPQHVADIKEVADGIVIGSEIVKRFKSNTREEIIKYLQSIQQTLNN</sequence>
<comment type="function">
    <text evidence="1">The alpha subunit is responsible for the aldol cleavage of indoleglycerol phosphate to indole and glyceraldehyde 3-phosphate.</text>
</comment>
<comment type="catalytic activity">
    <reaction evidence="1">
        <text>(1S,2R)-1-C-(indol-3-yl)glycerol 3-phosphate + L-serine = D-glyceraldehyde 3-phosphate + L-tryptophan + H2O</text>
        <dbReference type="Rhea" id="RHEA:10532"/>
        <dbReference type="ChEBI" id="CHEBI:15377"/>
        <dbReference type="ChEBI" id="CHEBI:33384"/>
        <dbReference type="ChEBI" id="CHEBI:57912"/>
        <dbReference type="ChEBI" id="CHEBI:58866"/>
        <dbReference type="ChEBI" id="CHEBI:59776"/>
        <dbReference type="EC" id="4.2.1.20"/>
    </reaction>
</comment>
<comment type="pathway">
    <text evidence="1">Amino-acid biosynthesis; L-tryptophan biosynthesis; L-tryptophan from chorismate: step 5/5.</text>
</comment>
<comment type="subunit">
    <text evidence="1">Tetramer of two alpha and two beta chains.</text>
</comment>
<comment type="similarity">
    <text evidence="1">Belongs to the TrpA family.</text>
</comment>
<name>TRPA_STAA3</name>
<keyword id="KW-0028">Amino-acid biosynthesis</keyword>
<keyword id="KW-0057">Aromatic amino acid biosynthesis</keyword>
<keyword id="KW-0456">Lyase</keyword>
<keyword id="KW-0822">Tryptophan biosynthesis</keyword>
<reference key="1">
    <citation type="journal article" date="2006" name="Lancet">
        <title>Complete genome sequence of USA300, an epidemic clone of community-acquired meticillin-resistant Staphylococcus aureus.</title>
        <authorList>
            <person name="Diep B.A."/>
            <person name="Gill S.R."/>
            <person name="Chang R.F."/>
            <person name="Phan T.H."/>
            <person name="Chen J.H."/>
            <person name="Davidson M.G."/>
            <person name="Lin F."/>
            <person name="Lin J."/>
            <person name="Carleton H.A."/>
            <person name="Mongodin E.F."/>
            <person name="Sensabaugh G.F."/>
            <person name="Perdreau-Remington F."/>
        </authorList>
    </citation>
    <scope>NUCLEOTIDE SEQUENCE [LARGE SCALE GENOMIC DNA]</scope>
    <source>
        <strain>USA300</strain>
    </source>
</reference>
<accession>Q2FH63</accession>
<gene>
    <name evidence="1" type="primary">trpA</name>
    <name type="ordered locus">SAUSA300_1268</name>
</gene>
<organism>
    <name type="scientific">Staphylococcus aureus (strain USA300)</name>
    <dbReference type="NCBI Taxonomy" id="367830"/>
    <lineage>
        <taxon>Bacteria</taxon>
        <taxon>Bacillati</taxon>
        <taxon>Bacillota</taxon>
        <taxon>Bacilli</taxon>
        <taxon>Bacillales</taxon>
        <taxon>Staphylococcaceae</taxon>
        <taxon>Staphylococcus</taxon>
    </lineage>
</organism>
<protein>
    <recommendedName>
        <fullName evidence="1">Tryptophan synthase alpha chain</fullName>
        <ecNumber evidence="1">4.2.1.20</ecNumber>
    </recommendedName>
</protein>
<evidence type="ECO:0000255" key="1">
    <source>
        <dbReference type="HAMAP-Rule" id="MF_00131"/>
    </source>
</evidence>
<dbReference type="EC" id="4.2.1.20" evidence="1"/>
<dbReference type="EMBL" id="CP000255">
    <property type="protein sequence ID" value="ABD21014.1"/>
    <property type="molecule type" value="Genomic_DNA"/>
</dbReference>
<dbReference type="RefSeq" id="WP_000163627.1">
    <property type="nucleotide sequence ID" value="NZ_CP027476.1"/>
</dbReference>
<dbReference type="SMR" id="Q2FH63"/>
<dbReference type="KEGG" id="saa:SAUSA300_1268"/>
<dbReference type="HOGENOM" id="CLU_016734_0_0_9"/>
<dbReference type="OMA" id="LVMTYWN"/>
<dbReference type="UniPathway" id="UPA00035">
    <property type="reaction ID" value="UER00044"/>
</dbReference>
<dbReference type="Proteomes" id="UP000001939">
    <property type="component" value="Chromosome"/>
</dbReference>
<dbReference type="GO" id="GO:0005829">
    <property type="term" value="C:cytosol"/>
    <property type="evidence" value="ECO:0007669"/>
    <property type="project" value="TreeGrafter"/>
</dbReference>
<dbReference type="GO" id="GO:0004834">
    <property type="term" value="F:tryptophan synthase activity"/>
    <property type="evidence" value="ECO:0007669"/>
    <property type="project" value="UniProtKB-UniRule"/>
</dbReference>
<dbReference type="CDD" id="cd04724">
    <property type="entry name" value="Tryptophan_synthase_alpha"/>
    <property type="match status" value="1"/>
</dbReference>
<dbReference type="Gene3D" id="3.20.20.70">
    <property type="entry name" value="Aldolase class I"/>
    <property type="match status" value="1"/>
</dbReference>
<dbReference type="HAMAP" id="MF_00131">
    <property type="entry name" value="Trp_synth_alpha"/>
    <property type="match status" value="1"/>
</dbReference>
<dbReference type="InterPro" id="IPR013785">
    <property type="entry name" value="Aldolase_TIM"/>
</dbReference>
<dbReference type="InterPro" id="IPR011060">
    <property type="entry name" value="RibuloseP-bd_barrel"/>
</dbReference>
<dbReference type="InterPro" id="IPR018204">
    <property type="entry name" value="Trp_synthase_alpha_AS"/>
</dbReference>
<dbReference type="InterPro" id="IPR002028">
    <property type="entry name" value="Trp_synthase_suA"/>
</dbReference>
<dbReference type="NCBIfam" id="TIGR00262">
    <property type="entry name" value="trpA"/>
    <property type="match status" value="1"/>
</dbReference>
<dbReference type="PANTHER" id="PTHR43406:SF1">
    <property type="entry name" value="TRYPTOPHAN SYNTHASE ALPHA CHAIN, CHLOROPLASTIC"/>
    <property type="match status" value="1"/>
</dbReference>
<dbReference type="PANTHER" id="PTHR43406">
    <property type="entry name" value="TRYPTOPHAN SYNTHASE, ALPHA CHAIN"/>
    <property type="match status" value="1"/>
</dbReference>
<dbReference type="Pfam" id="PF00290">
    <property type="entry name" value="Trp_syntA"/>
    <property type="match status" value="1"/>
</dbReference>
<dbReference type="SUPFAM" id="SSF51366">
    <property type="entry name" value="Ribulose-phoshate binding barrel"/>
    <property type="match status" value="1"/>
</dbReference>
<dbReference type="PROSITE" id="PS00167">
    <property type="entry name" value="TRP_SYNTHASE_ALPHA"/>
    <property type="match status" value="1"/>
</dbReference>